<protein>
    <recommendedName>
        <fullName>Synaptophysin-like protein 2</fullName>
    </recommendedName>
    <alternativeName>
        <fullName>Mitsugumin-29</fullName>
        <shortName>Mg29</shortName>
    </alternativeName>
</protein>
<organism>
    <name type="scientific">Mus musculus</name>
    <name type="common">Mouse</name>
    <dbReference type="NCBI Taxonomy" id="10090"/>
    <lineage>
        <taxon>Eukaryota</taxon>
        <taxon>Metazoa</taxon>
        <taxon>Chordata</taxon>
        <taxon>Craniata</taxon>
        <taxon>Vertebrata</taxon>
        <taxon>Euteleostomi</taxon>
        <taxon>Mammalia</taxon>
        <taxon>Eutheria</taxon>
        <taxon>Euarchontoglires</taxon>
        <taxon>Glires</taxon>
        <taxon>Rodentia</taxon>
        <taxon>Myomorpha</taxon>
        <taxon>Muroidea</taxon>
        <taxon>Muridae</taxon>
        <taxon>Murinae</taxon>
        <taxon>Mus</taxon>
        <taxon>Mus</taxon>
    </lineage>
</organism>
<gene>
    <name type="primary">Sypl2</name>
    <name type="synonym">Mg29</name>
</gene>
<evidence type="ECO:0000250" key="1"/>
<evidence type="ECO:0000255" key="2"/>
<evidence type="ECO:0000255" key="3">
    <source>
        <dbReference type="PROSITE-ProRule" id="PRU00581"/>
    </source>
</evidence>
<evidence type="ECO:0000256" key="4">
    <source>
        <dbReference type="SAM" id="MobiDB-lite"/>
    </source>
</evidence>
<evidence type="ECO:0000269" key="5">
    <source>
    </source>
</evidence>
<evidence type="ECO:0000305" key="6"/>
<dbReference type="EMBL" id="AB010144">
    <property type="protein sequence ID" value="BAA32531.1"/>
    <property type="molecule type" value="Genomic_DNA"/>
</dbReference>
<dbReference type="EMBL" id="AB010140">
    <property type="protein sequence ID" value="BAA32530.1"/>
    <property type="molecule type" value="mRNA"/>
</dbReference>
<dbReference type="EMBL" id="BC030038">
    <property type="protein sequence ID" value="AAH30038.1"/>
    <property type="molecule type" value="mRNA"/>
</dbReference>
<dbReference type="CCDS" id="CCDS57253.1"/>
<dbReference type="RefSeq" id="NP_032622.1">
    <property type="nucleotide sequence ID" value="NM_008596.1"/>
</dbReference>
<dbReference type="SMR" id="O89104"/>
<dbReference type="FunCoup" id="O89104">
    <property type="interactions" value="7"/>
</dbReference>
<dbReference type="STRING" id="10090.ENSMUSP00000116756"/>
<dbReference type="GlyCosmos" id="O89104">
    <property type="glycosylation" value="1 site, No reported glycans"/>
</dbReference>
<dbReference type="GlyGen" id="O89104">
    <property type="glycosylation" value="2 sites"/>
</dbReference>
<dbReference type="iPTMnet" id="O89104"/>
<dbReference type="PhosphoSitePlus" id="O89104"/>
<dbReference type="jPOST" id="O89104"/>
<dbReference type="PaxDb" id="10090-ENSMUSP00000116756"/>
<dbReference type="ProteomicsDB" id="254743"/>
<dbReference type="Antibodypedia" id="33759">
    <property type="antibodies" value="39 antibodies from 20 providers"/>
</dbReference>
<dbReference type="DNASU" id="17306"/>
<dbReference type="Ensembl" id="ENSMUST00000141387.4">
    <property type="protein sequence ID" value="ENSMUSP00000116756.3"/>
    <property type="gene ID" value="ENSMUSG00000027887.12"/>
</dbReference>
<dbReference type="GeneID" id="17306"/>
<dbReference type="KEGG" id="mmu:17306"/>
<dbReference type="UCSC" id="uc008qyn.1">
    <property type="organism name" value="mouse"/>
</dbReference>
<dbReference type="AGR" id="MGI:1328311"/>
<dbReference type="CTD" id="284612"/>
<dbReference type="MGI" id="MGI:1328311">
    <property type="gene designation" value="Sypl2"/>
</dbReference>
<dbReference type="VEuPathDB" id="HostDB:ENSMUSG00000027887"/>
<dbReference type="eggNOG" id="ENOG502RR69">
    <property type="taxonomic scope" value="Eukaryota"/>
</dbReference>
<dbReference type="GeneTree" id="ENSGT01030000234637"/>
<dbReference type="HOGENOM" id="CLU_064642_1_1_1"/>
<dbReference type="InParanoid" id="O89104"/>
<dbReference type="OMA" id="VFYLRFH"/>
<dbReference type="OrthoDB" id="10006326at2759"/>
<dbReference type="BioGRID-ORCS" id="17306">
    <property type="hits" value="0 hits in 77 CRISPR screens"/>
</dbReference>
<dbReference type="ChiTaRS" id="Sypl2">
    <property type="organism name" value="mouse"/>
</dbReference>
<dbReference type="PRO" id="PR:O89104"/>
<dbReference type="Proteomes" id="UP000000589">
    <property type="component" value="Chromosome 3"/>
</dbReference>
<dbReference type="RNAct" id="O89104">
    <property type="molecule type" value="protein"/>
</dbReference>
<dbReference type="Bgee" id="ENSMUSG00000027887">
    <property type="expression patterns" value="Expressed in vastus lateralis and 67 other cell types or tissues"/>
</dbReference>
<dbReference type="GO" id="GO:0016020">
    <property type="term" value="C:membrane"/>
    <property type="evidence" value="ECO:0007669"/>
    <property type="project" value="UniProtKB-SubCell"/>
</dbReference>
<dbReference type="GO" id="GO:0008021">
    <property type="term" value="C:synaptic vesicle"/>
    <property type="evidence" value="ECO:0007669"/>
    <property type="project" value="InterPro"/>
</dbReference>
<dbReference type="GO" id="GO:0007507">
    <property type="term" value="P:heart development"/>
    <property type="evidence" value="ECO:0000316"/>
    <property type="project" value="MGI"/>
</dbReference>
<dbReference type="GO" id="GO:0006874">
    <property type="term" value="P:intracellular calcium ion homeostasis"/>
    <property type="evidence" value="ECO:0000315"/>
    <property type="project" value="MGI"/>
</dbReference>
<dbReference type="GO" id="GO:0033292">
    <property type="term" value="P:T-tubule organization"/>
    <property type="evidence" value="ECO:0000316"/>
    <property type="project" value="MGI"/>
</dbReference>
<dbReference type="InterPro" id="IPR008253">
    <property type="entry name" value="Marvel"/>
</dbReference>
<dbReference type="InterPro" id="IPR001285">
    <property type="entry name" value="Synaptophysin/porin"/>
</dbReference>
<dbReference type="PANTHER" id="PTHR10306">
    <property type="entry name" value="SYNAPTOPHYSIN"/>
    <property type="match status" value="1"/>
</dbReference>
<dbReference type="PANTHER" id="PTHR10306:SF8">
    <property type="entry name" value="SYNAPTOPHYSIN-LIKE PROTEIN 2"/>
    <property type="match status" value="1"/>
</dbReference>
<dbReference type="Pfam" id="PF01284">
    <property type="entry name" value="MARVEL"/>
    <property type="match status" value="1"/>
</dbReference>
<dbReference type="PRINTS" id="PR00220">
    <property type="entry name" value="SYNAPTOPHYSN"/>
</dbReference>
<dbReference type="PROSITE" id="PS51225">
    <property type="entry name" value="MARVEL"/>
    <property type="match status" value="1"/>
</dbReference>
<reference key="1">
    <citation type="journal article" date="1998" name="FEBS Lett.">
        <title>Structure and expression of mitsugumin29 gene.</title>
        <authorList>
            <person name="Shimuta M."/>
            <person name="Komazaki S."/>
            <person name="Nishi M."/>
            <person name="Iino M."/>
            <person name="Nakagawara K."/>
            <person name="Takeshima H."/>
        </authorList>
    </citation>
    <scope>NUCLEOTIDE SEQUENCE [GENOMIC DNA / MRNA]</scope>
    <scope>TISSUE SPECIFICITY</scope>
    <source>
        <strain>129</strain>
        <strain>C57BL/6J</strain>
    </source>
</reference>
<reference key="2">
    <citation type="journal article" date="2004" name="Genome Res.">
        <title>The status, quality, and expansion of the NIH full-length cDNA project: the Mammalian Gene Collection (MGC).</title>
        <authorList>
            <consortium name="The MGC Project Team"/>
        </authorList>
    </citation>
    <scope>NUCLEOTIDE SEQUENCE [LARGE SCALE MRNA]</scope>
    <source>
        <tissue>Mammary gland</tissue>
    </source>
</reference>
<reference key="3">
    <citation type="journal article" date="2010" name="Cell">
        <title>A tissue-specific atlas of mouse protein phosphorylation and expression.</title>
        <authorList>
            <person name="Huttlin E.L."/>
            <person name="Jedrychowski M.P."/>
            <person name="Elias J.E."/>
            <person name="Goswami T."/>
            <person name="Rad R."/>
            <person name="Beausoleil S.A."/>
            <person name="Villen J."/>
            <person name="Haas W."/>
            <person name="Sowa M.E."/>
            <person name="Gygi S.P."/>
        </authorList>
    </citation>
    <scope>IDENTIFICATION BY MASS SPECTROMETRY [LARGE SCALE ANALYSIS]</scope>
    <source>
        <tissue>Brown adipose tissue</tissue>
        <tissue>Kidney</tissue>
        <tissue>Lung</tissue>
    </source>
</reference>
<keyword id="KW-0325">Glycoprotein</keyword>
<keyword id="KW-0472">Membrane</keyword>
<keyword id="KW-1185">Reference proteome</keyword>
<keyword id="KW-0812">Transmembrane</keyword>
<keyword id="KW-1133">Transmembrane helix</keyword>
<comment type="function">
    <text evidence="1">Involved in communication between the T-tubular and junctional sarcoplasmic reticulum (SR) membranes.</text>
</comment>
<comment type="subcellular location">
    <subcellularLocation>
        <location>Membrane</location>
        <topology>Multi-pass membrane protein</topology>
    </subcellularLocation>
    <text>Triad junction, the junctional complex between the transverse tubule and the sarcoplasmic reticulum.</text>
</comment>
<comment type="tissue specificity">
    <text evidence="5">Expressed abundantly in skeletal muscle and at lower levels in the kidney.</text>
</comment>
<comment type="similarity">
    <text evidence="6">Belongs to the synaptophysin/synaptobrevin family.</text>
</comment>
<feature type="chain" id="PRO_0000179167" description="Synaptophysin-like protein 2">
    <location>
        <begin position="1"/>
        <end position="264"/>
    </location>
</feature>
<feature type="topological domain" description="Cytoplasmic" evidence="2">
    <location>
        <begin position="1"/>
        <end position="33"/>
    </location>
</feature>
<feature type="transmembrane region" description="Helical" evidence="2">
    <location>
        <begin position="34"/>
        <end position="54"/>
    </location>
</feature>
<feature type="topological domain" description="Vesicular" evidence="2">
    <location>
        <begin position="55"/>
        <end position="116"/>
    </location>
</feature>
<feature type="transmembrane region" description="Helical" evidence="2">
    <location>
        <begin position="117"/>
        <end position="137"/>
    </location>
</feature>
<feature type="topological domain" description="Cytoplasmic" evidence="2">
    <location>
        <begin position="138"/>
        <end position="150"/>
    </location>
</feature>
<feature type="transmembrane region" description="Helical" evidence="2">
    <location>
        <begin position="151"/>
        <end position="171"/>
    </location>
</feature>
<feature type="topological domain" description="Vesicular" evidence="2">
    <location>
        <begin position="172"/>
        <end position="213"/>
    </location>
</feature>
<feature type="transmembrane region" description="Helical" evidence="2">
    <location>
        <begin position="214"/>
        <end position="234"/>
    </location>
</feature>
<feature type="topological domain" description="Cytoplasmic" evidence="2">
    <location>
        <begin position="235"/>
        <end position="264"/>
    </location>
</feature>
<feature type="domain" description="MARVEL" evidence="3">
    <location>
        <begin position="30"/>
        <end position="238"/>
    </location>
</feature>
<feature type="region of interest" description="Disordered" evidence="4">
    <location>
        <begin position="242"/>
        <end position="264"/>
    </location>
</feature>
<feature type="glycosylation site" description="N-linked (GlcNAc...) asparagine" evidence="2">
    <location>
        <position position="213"/>
    </location>
</feature>
<sequence>MSSTESPGRTSDKSPRQQVDRLLLGLRWQRLEEPLGFIKVLQWLFAIFAFGSCGSYSGETGALVLCNNEAKDVSSIIVLFGYPFRLYQVQYEMPLCDQDSTSKTMNLMGDFSAPAEFFVTLGIFSFFYTMAALVIYLRFHKLYTENKRFPLVDFCVTVSFTFFWLVAAAAWGKGLTDVKGATRPSSLTAAMSVCHGEEAVCSAGATPSMGLANLSVLFGFINFFLWAGNCWFVFKETPWHGQGQDQGQGPSQESAAEQGAVEKQ</sequence>
<accession>O89104</accession>
<proteinExistence type="evidence at protein level"/>
<name>SYPL2_MOUSE</name>